<dbReference type="EC" id="2.2.1.2"/>
<dbReference type="EMBL" id="CU329672">
    <property type="protein sequence ID" value="CAA18994.1"/>
    <property type="molecule type" value="Genomic_DNA"/>
</dbReference>
<dbReference type="EMBL" id="AB010049">
    <property type="protein sequence ID" value="BAA24182.1"/>
    <property type="molecule type" value="mRNA"/>
</dbReference>
<dbReference type="PIR" id="T40834">
    <property type="entry name" value="T40834"/>
</dbReference>
<dbReference type="PIR" id="T43308">
    <property type="entry name" value="T43308"/>
</dbReference>
<dbReference type="RefSeq" id="NP_587953.1">
    <property type="nucleotide sequence ID" value="NM_001022944.2"/>
</dbReference>
<dbReference type="SMR" id="O42700"/>
<dbReference type="BioGRID" id="275551">
    <property type="interactions" value="39"/>
</dbReference>
<dbReference type="FunCoup" id="O42700">
    <property type="interactions" value="426"/>
</dbReference>
<dbReference type="STRING" id="284812.O42700"/>
<dbReference type="iPTMnet" id="O42700"/>
<dbReference type="PaxDb" id="4896-SPCC1020.06c.1"/>
<dbReference type="EnsemblFungi" id="SPCC1020.06c.1">
    <property type="protein sequence ID" value="SPCC1020.06c.1:pep"/>
    <property type="gene ID" value="SPCC1020.06c"/>
</dbReference>
<dbReference type="PomBase" id="SPCC1020.06c">
    <property type="gene designation" value="tal1"/>
</dbReference>
<dbReference type="VEuPathDB" id="FungiDB:SPCC1020.06c"/>
<dbReference type="eggNOG" id="KOG2772">
    <property type="taxonomic scope" value="Eukaryota"/>
</dbReference>
<dbReference type="HOGENOM" id="CLU_047470_0_1_1"/>
<dbReference type="InParanoid" id="O42700"/>
<dbReference type="OMA" id="FATIKKY"/>
<dbReference type="PhylomeDB" id="O42700"/>
<dbReference type="Reactome" id="R-SPO-163754">
    <property type="pathway name" value="Insulin effects increased synthesis of Xylulose-5-Phosphate"/>
</dbReference>
<dbReference type="Reactome" id="R-SPO-71336">
    <property type="pathway name" value="Pentose phosphate pathway"/>
</dbReference>
<dbReference type="UniPathway" id="UPA00115">
    <property type="reaction ID" value="UER00414"/>
</dbReference>
<dbReference type="PRO" id="PR:O42700"/>
<dbReference type="Proteomes" id="UP000002485">
    <property type="component" value="Chromosome III"/>
</dbReference>
<dbReference type="GO" id="GO:0005829">
    <property type="term" value="C:cytosol"/>
    <property type="evidence" value="ECO:0007005"/>
    <property type="project" value="PomBase"/>
</dbReference>
<dbReference type="GO" id="GO:0005634">
    <property type="term" value="C:nucleus"/>
    <property type="evidence" value="ECO:0007005"/>
    <property type="project" value="PomBase"/>
</dbReference>
<dbReference type="GO" id="GO:0004801">
    <property type="term" value="F:transaldolase activity"/>
    <property type="evidence" value="ECO:0000269"/>
    <property type="project" value="PomBase"/>
</dbReference>
<dbReference type="GO" id="GO:0005975">
    <property type="term" value="P:carbohydrate metabolic process"/>
    <property type="evidence" value="ECO:0007669"/>
    <property type="project" value="InterPro"/>
</dbReference>
<dbReference type="GO" id="GO:0009052">
    <property type="term" value="P:pentose-phosphate shunt, non-oxidative branch"/>
    <property type="evidence" value="ECO:0000269"/>
    <property type="project" value="PomBase"/>
</dbReference>
<dbReference type="CDD" id="cd00957">
    <property type="entry name" value="Transaldolase_TalAB"/>
    <property type="match status" value="1"/>
</dbReference>
<dbReference type="FunFam" id="3.20.20.70:FF:000088">
    <property type="entry name" value="Transaldolase"/>
    <property type="match status" value="1"/>
</dbReference>
<dbReference type="Gene3D" id="3.20.20.70">
    <property type="entry name" value="Aldolase class I"/>
    <property type="match status" value="1"/>
</dbReference>
<dbReference type="HAMAP" id="MF_00492">
    <property type="entry name" value="Transaldolase_1"/>
    <property type="match status" value="1"/>
</dbReference>
<dbReference type="InterPro" id="IPR013785">
    <property type="entry name" value="Aldolase_TIM"/>
</dbReference>
<dbReference type="InterPro" id="IPR001585">
    <property type="entry name" value="TAL/FSA"/>
</dbReference>
<dbReference type="InterPro" id="IPR004730">
    <property type="entry name" value="Transaldolase_1"/>
</dbReference>
<dbReference type="InterPro" id="IPR018225">
    <property type="entry name" value="Transaldolase_AS"/>
</dbReference>
<dbReference type="NCBIfam" id="TIGR00874">
    <property type="entry name" value="talAB"/>
    <property type="match status" value="1"/>
</dbReference>
<dbReference type="PANTHER" id="PTHR10683">
    <property type="entry name" value="TRANSALDOLASE"/>
    <property type="match status" value="1"/>
</dbReference>
<dbReference type="PANTHER" id="PTHR10683:SF18">
    <property type="entry name" value="TRANSALDOLASE"/>
    <property type="match status" value="1"/>
</dbReference>
<dbReference type="Pfam" id="PF00923">
    <property type="entry name" value="TAL_FSA"/>
    <property type="match status" value="1"/>
</dbReference>
<dbReference type="SUPFAM" id="SSF51569">
    <property type="entry name" value="Aldolase"/>
    <property type="match status" value="1"/>
</dbReference>
<dbReference type="PROSITE" id="PS01054">
    <property type="entry name" value="TRANSALDOLASE_1"/>
    <property type="match status" value="1"/>
</dbReference>
<dbReference type="PROSITE" id="PS00958">
    <property type="entry name" value="TRANSALDOLASE_2"/>
    <property type="match status" value="1"/>
</dbReference>
<feature type="chain" id="PRO_0000173573" description="Transaldolase">
    <location>
        <begin position="1"/>
        <end position="322"/>
    </location>
</feature>
<feature type="active site" description="Schiff-base intermediate with substrate" evidence="1">
    <location>
        <position position="132"/>
    </location>
</feature>
<feature type="modified residue" description="Phosphoserine" evidence="2">
    <location>
        <position position="268"/>
    </location>
</feature>
<feature type="modified residue" description="Phosphoserine" evidence="2">
    <location>
        <position position="269"/>
    </location>
</feature>
<keyword id="KW-0570">Pentose shunt</keyword>
<keyword id="KW-0597">Phosphoprotein</keyword>
<keyword id="KW-1185">Reference proteome</keyword>
<keyword id="KW-0704">Schiff base</keyword>
<keyword id="KW-0808">Transferase</keyword>
<accession>O42700</accession>
<evidence type="ECO:0000250" key="1"/>
<evidence type="ECO:0000269" key="2">
    <source>
    </source>
</evidence>
<evidence type="ECO:0000305" key="3"/>
<name>TAL1_SCHPO</name>
<proteinExistence type="evidence at protein level"/>
<reference key="1">
    <citation type="journal article" date="2002" name="Nature">
        <title>The genome sequence of Schizosaccharomyces pombe.</title>
        <authorList>
            <person name="Wood V."/>
            <person name="Gwilliam R."/>
            <person name="Rajandream M.A."/>
            <person name="Lyne M.H."/>
            <person name="Lyne R."/>
            <person name="Stewart A."/>
            <person name="Sgouros J.G."/>
            <person name="Peat N."/>
            <person name="Hayles J."/>
            <person name="Baker S.G."/>
            <person name="Basham D."/>
            <person name="Bowman S."/>
            <person name="Brooks K."/>
            <person name="Brown D."/>
            <person name="Brown S."/>
            <person name="Chillingworth T."/>
            <person name="Churcher C.M."/>
            <person name="Collins M."/>
            <person name="Connor R."/>
            <person name="Cronin A."/>
            <person name="Davis P."/>
            <person name="Feltwell T."/>
            <person name="Fraser A."/>
            <person name="Gentles S."/>
            <person name="Goble A."/>
            <person name="Hamlin N."/>
            <person name="Harris D.E."/>
            <person name="Hidalgo J."/>
            <person name="Hodgson G."/>
            <person name="Holroyd S."/>
            <person name="Hornsby T."/>
            <person name="Howarth S."/>
            <person name="Huckle E.J."/>
            <person name="Hunt S."/>
            <person name="Jagels K."/>
            <person name="James K.D."/>
            <person name="Jones L."/>
            <person name="Jones M."/>
            <person name="Leather S."/>
            <person name="McDonald S."/>
            <person name="McLean J."/>
            <person name="Mooney P."/>
            <person name="Moule S."/>
            <person name="Mungall K.L."/>
            <person name="Murphy L.D."/>
            <person name="Niblett D."/>
            <person name="Odell C."/>
            <person name="Oliver K."/>
            <person name="O'Neil S."/>
            <person name="Pearson D."/>
            <person name="Quail M.A."/>
            <person name="Rabbinowitsch E."/>
            <person name="Rutherford K.M."/>
            <person name="Rutter S."/>
            <person name="Saunders D."/>
            <person name="Seeger K."/>
            <person name="Sharp S."/>
            <person name="Skelton J."/>
            <person name="Simmonds M.N."/>
            <person name="Squares R."/>
            <person name="Squares S."/>
            <person name="Stevens K."/>
            <person name="Taylor K."/>
            <person name="Taylor R.G."/>
            <person name="Tivey A."/>
            <person name="Walsh S.V."/>
            <person name="Warren T."/>
            <person name="Whitehead S."/>
            <person name="Woodward J.R."/>
            <person name="Volckaert G."/>
            <person name="Aert R."/>
            <person name="Robben J."/>
            <person name="Grymonprez B."/>
            <person name="Weltjens I."/>
            <person name="Vanstreels E."/>
            <person name="Rieger M."/>
            <person name="Schaefer M."/>
            <person name="Mueller-Auer S."/>
            <person name="Gabel C."/>
            <person name="Fuchs M."/>
            <person name="Duesterhoeft A."/>
            <person name="Fritzc C."/>
            <person name="Holzer E."/>
            <person name="Moestl D."/>
            <person name="Hilbert H."/>
            <person name="Borzym K."/>
            <person name="Langer I."/>
            <person name="Beck A."/>
            <person name="Lehrach H."/>
            <person name="Reinhardt R."/>
            <person name="Pohl T.M."/>
            <person name="Eger P."/>
            <person name="Zimmermann W."/>
            <person name="Wedler H."/>
            <person name="Wambutt R."/>
            <person name="Purnelle B."/>
            <person name="Goffeau A."/>
            <person name="Cadieu E."/>
            <person name="Dreano S."/>
            <person name="Gloux S."/>
            <person name="Lelaure V."/>
            <person name="Mottier S."/>
            <person name="Galibert F."/>
            <person name="Aves S.J."/>
            <person name="Xiang Z."/>
            <person name="Hunt C."/>
            <person name="Moore K."/>
            <person name="Hurst S.M."/>
            <person name="Lucas M."/>
            <person name="Rochet M."/>
            <person name="Gaillardin C."/>
            <person name="Tallada V.A."/>
            <person name="Garzon A."/>
            <person name="Thode G."/>
            <person name="Daga R.R."/>
            <person name="Cruzado L."/>
            <person name="Jimenez J."/>
            <person name="Sanchez M."/>
            <person name="del Rey F."/>
            <person name="Benito J."/>
            <person name="Dominguez A."/>
            <person name="Revuelta J.L."/>
            <person name="Moreno S."/>
            <person name="Armstrong J."/>
            <person name="Forsburg S.L."/>
            <person name="Cerutti L."/>
            <person name="Lowe T."/>
            <person name="McCombie W.R."/>
            <person name="Paulsen I."/>
            <person name="Potashkin J."/>
            <person name="Shpakovski G.V."/>
            <person name="Ussery D."/>
            <person name="Barrell B.G."/>
            <person name="Nurse P."/>
        </authorList>
    </citation>
    <scope>NUCLEOTIDE SEQUENCE [LARGE SCALE GENOMIC DNA]</scope>
    <source>
        <strain>972 / ATCC 24843</strain>
    </source>
</reference>
<reference key="2">
    <citation type="submission" date="1997-12" db="EMBL/GenBank/DDBJ databases">
        <title>S.pombe transaldolase homolog.</title>
        <authorList>
            <person name="Kawamukai M."/>
        </authorList>
    </citation>
    <scope>NUCLEOTIDE SEQUENCE [MRNA] OF 111-322</scope>
</reference>
<reference key="3">
    <citation type="journal article" date="2008" name="J. Proteome Res.">
        <title>Phosphoproteome analysis of fission yeast.</title>
        <authorList>
            <person name="Wilson-Grady J.T."/>
            <person name="Villen J."/>
            <person name="Gygi S.P."/>
        </authorList>
    </citation>
    <scope>PHOSPHORYLATION [LARGE SCALE ANALYSIS] AT SER-268 AND SER-269</scope>
    <scope>IDENTIFICATION BY MASS SPECTROMETRY</scope>
</reference>
<protein>
    <recommendedName>
        <fullName>Transaldolase</fullName>
        <ecNumber>2.2.1.2</ecNumber>
    </recommendedName>
</protein>
<sequence length="322" mass="35238">MSSLEQLKATGTVVVSDTGDFESIAKYKPQDATTNPSLILAASKKPQYAALVDAAVDYAKAKGGSINSQIEIAFDRLLIEFGTKILAIVPGRVSTEVDARYSFDTQTTIEKARHLIKLYEAEGIGRERVLIKIASTYEGIQAAKQLEEEGIHCNLTLLFSFVQAVACAEANVTLISPFVGRILDFYKAKNNRDYTAQEDPGVVSVSNIFNYYKKFGYKTIVMGASFRNVGEIKELAGVDFLTISPALLEQLNNSTDAVPKKLDASKASSLNLEKVSYLTDEPKFRFDFNNDEMAVVKLSTGIAAFAKDADTLRTILKAKLEA</sequence>
<gene>
    <name type="primary">tal1</name>
    <name type="ORF">SPCC1020.06c</name>
</gene>
<comment type="function">
    <text evidence="1">Transaldolase is important for the balance of metabolites in the pentose-phosphate pathway.</text>
</comment>
<comment type="catalytic activity">
    <reaction>
        <text>D-sedoheptulose 7-phosphate + D-glyceraldehyde 3-phosphate = D-erythrose 4-phosphate + beta-D-fructose 6-phosphate</text>
        <dbReference type="Rhea" id="RHEA:17053"/>
        <dbReference type="ChEBI" id="CHEBI:16897"/>
        <dbReference type="ChEBI" id="CHEBI:57483"/>
        <dbReference type="ChEBI" id="CHEBI:57634"/>
        <dbReference type="ChEBI" id="CHEBI:59776"/>
        <dbReference type="EC" id="2.2.1.2"/>
    </reaction>
</comment>
<comment type="pathway">
    <text>Carbohydrate degradation; pentose phosphate pathway; D-glyceraldehyde 3-phosphate and beta-D-fructose 6-phosphate from D-ribose 5-phosphate and D-xylulose 5-phosphate (non-oxidative stage): step 2/3.</text>
</comment>
<comment type="subunit">
    <text evidence="1">Homodimer.</text>
</comment>
<comment type="similarity">
    <text evidence="3">Belongs to the transaldolase family. Type 1 subfamily.</text>
</comment>
<organism>
    <name type="scientific">Schizosaccharomyces pombe (strain 972 / ATCC 24843)</name>
    <name type="common">Fission yeast</name>
    <dbReference type="NCBI Taxonomy" id="284812"/>
    <lineage>
        <taxon>Eukaryota</taxon>
        <taxon>Fungi</taxon>
        <taxon>Dikarya</taxon>
        <taxon>Ascomycota</taxon>
        <taxon>Taphrinomycotina</taxon>
        <taxon>Schizosaccharomycetes</taxon>
        <taxon>Schizosaccharomycetales</taxon>
        <taxon>Schizosaccharomycetaceae</taxon>
        <taxon>Schizosaccharomyces</taxon>
    </lineage>
</organism>